<dbReference type="EMBL" id="M68929">
    <property type="protein sequence ID" value="AAC09465.1"/>
    <property type="molecule type" value="Genomic_DNA"/>
</dbReference>
<dbReference type="PIR" id="S26011">
    <property type="entry name" value="S26011"/>
</dbReference>
<dbReference type="GO" id="GO:0005739">
    <property type="term" value="C:mitochondrion"/>
    <property type="evidence" value="ECO:0007669"/>
    <property type="project" value="UniProtKB-SubCell"/>
</dbReference>
<dbReference type="GO" id="GO:0017004">
    <property type="term" value="P:cytochrome complex assembly"/>
    <property type="evidence" value="ECO:0007669"/>
    <property type="project" value="InterPro"/>
</dbReference>
<dbReference type="InterPro" id="IPR032523">
    <property type="entry name" value="CcmF_C"/>
</dbReference>
<dbReference type="InterPro" id="IPR044955">
    <property type="entry name" value="CCMFC"/>
</dbReference>
<dbReference type="PANTHER" id="PTHR36010">
    <property type="entry name" value="CYTOCHROME C BIOGENESIS CCMF C-TERMINAL-LIKE MITOCHONDRIAL PROTEIN-RELATED"/>
    <property type="match status" value="1"/>
</dbReference>
<dbReference type="PANTHER" id="PTHR36010:SF1">
    <property type="entry name" value="CYTOCHROME C BIOGENESIS CCMF C-TERMINAL-LIKE MITOCHONDRIAL PROTEIN-RELATED"/>
    <property type="match status" value="1"/>
</dbReference>
<dbReference type="Pfam" id="PF16327">
    <property type="entry name" value="CcmF_C"/>
    <property type="match status" value="1"/>
</dbReference>
<gene>
    <name type="primary">YMF3</name>
</gene>
<keyword id="KW-0496">Mitochondrion</keyword>
<comment type="subcellular location">
    <subcellularLocation>
        <location evidence="1">Mitochondrion</location>
    </subcellularLocation>
</comment>
<reference key="1">
    <citation type="journal article" date="1992" name="J. Mol. Biol.">
        <title>Gene organization deduced from the complete sequence of liverwort Marchantia polymorpha mitochondrial DNA. A primitive form of plant mitochondrial genome.</title>
        <authorList>
            <person name="Oda K."/>
            <person name="Yamato K."/>
            <person name="Ohta E."/>
            <person name="Nakamura Y."/>
            <person name="Takemura M."/>
            <person name="Nozato N."/>
            <person name="Akashi K."/>
            <person name="Kanegae T."/>
            <person name="Ogura Y."/>
            <person name="Kohchi T."/>
            <person name="Ohyama K."/>
        </authorList>
    </citation>
    <scope>NUCLEOTIDE SEQUENCE [GENOMIC DNA]</scope>
</reference>
<feature type="chain" id="PRO_0000196834" description="Uncharacterized mitochondrial protein ymf3">
    <location>
        <begin position="1"/>
        <end position="169"/>
    </location>
</feature>
<proteinExistence type="predicted"/>
<evidence type="ECO:0000305" key="1"/>
<accession>P38452</accession>
<name>YMF03_MARPO</name>
<geneLocation type="mitochondrion"/>
<protein>
    <recommendedName>
        <fullName>Uncharacterized mitochondrial protein ymf3</fullName>
    </recommendedName>
    <alternativeName>
        <fullName>ORF169</fullName>
    </alternativeName>
</protein>
<organism>
    <name type="scientific">Marchantia polymorpha</name>
    <name type="common">Common liverwort</name>
    <name type="synonym">Marchantia aquatica</name>
    <dbReference type="NCBI Taxonomy" id="3197"/>
    <lineage>
        <taxon>Eukaryota</taxon>
        <taxon>Viridiplantae</taxon>
        <taxon>Streptophyta</taxon>
        <taxon>Embryophyta</taxon>
        <taxon>Marchantiophyta</taxon>
        <taxon>Marchantiopsida</taxon>
        <taxon>Marchantiidae</taxon>
        <taxon>Marchantiales</taxon>
        <taxon>Marchantiaceae</taxon>
        <taxon>Marchantia</taxon>
    </lineage>
</organism>
<sequence>MVQLQNFFFFLIFLVVLCGTAAPILFQWLVSRDVSTGAPFFNGTIIPIFTSLLLVLVYIHSRGFMRSLDEAKRIVLIRARPILLPNIIEKSSPKKIQYISFFLDEKALSIFSFFRQFFFSFFVRQFPALCFVGQYFGFVVSHKTKSGTLSDSARALGPCCCFFILLLSN</sequence>